<reference key="1">
    <citation type="journal article" date="1991" name="J. Gen. Virol.">
        <title>Identification of variable domains of the attachment (G) protein of subgroup A respiratory syncytial viruses.</title>
        <authorList>
            <person name="Cane P.A."/>
            <person name="Matthews D.A."/>
            <person name="Pringle C.R."/>
        </authorList>
    </citation>
    <scope>NUCLEOTIDE SEQUENCE</scope>
</reference>
<sequence length="297" mass="32772">MSKTKDQRTAKTLERTWDTLNHLLFISSCLYKLNLKSIAQITLSILAMIISTSLIIAAIIFIASANHKVTLTTAIIQDATSQIKNTTQTYLTQNTQLGISFSNLSETTSQPTTTPALTTPSAKSTPQSTTVKTKNTTTTQIQPSKPTTKQRQKKPPNKPNNDFHFEVFNFVPCSICSNNPTCWAICKRIPNKKPGKKTTTKPTKKPTIKTTKKDLKPQTTKPKEVLTTKPTEKPTINTTRTNIRTTLLTTNTTGNPEYTSQKETLHSTSPEGNPSPSQVYTTSEYPSQPPSPSNTTN</sequence>
<accession>P27023</accession>
<gene>
    <name type="primary">G</name>
</gene>
<protein>
    <recommendedName>
        <fullName>Major surface glycoprotein G</fullName>
    </recommendedName>
    <alternativeName>
        <fullName>Attachment glycoprotein G</fullName>
    </alternativeName>
    <alternativeName>
        <fullName>Membrane-bound glycoprotein</fullName>
        <shortName>mG</shortName>
    </alternativeName>
    <component>
        <recommendedName>
            <fullName evidence="2">Mature secreted glycoprotein G</fullName>
            <shortName evidence="2">Mature sG</shortName>
        </recommendedName>
    </component>
</protein>
<dbReference type="PIR" id="JQ1206">
    <property type="entry name" value="JQ1206"/>
</dbReference>
<dbReference type="SMR" id="P27023"/>
<dbReference type="GlyCosmos" id="P27023">
    <property type="glycosylation" value="32 sites, No reported glycans"/>
</dbReference>
<dbReference type="GO" id="GO:0005576">
    <property type="term" value="C:extracellular region"/>
    <property type="evidence" value="ECO:0007669"/>
    <property type="project" value="UniProtKB-SubCell"/>
</dbReference>
<dbReference type="GO" id="GO:0020002">
    <property type="term" value="C:host cell plasma membrane"/>
    <property type="evidence" value="ECO:0007669"/>
    <property type="project" value="UniProtKB-SubCell"/>
</dbReference>
<dbReference type="GO" id="GO:0016020">
    <property type="term" value="C:membrane"/>
    <property type="evidence" value="ECO:0007669"/>
    <property type="project" value="UniProtKB-KW"/>
</dbReference>
<dbReference type="GO" id="GO:0055036">
    <property type="term" value="C:virion membrane"/>
    <property type="evidence" value="ECO:0007669"/>
    <property type="project" value="UniProtKB-SubCell"/>
</dbReference>
<dbReference type="GO" id="GO:0046718">
    <property type="term" value="P:symbiont entry into host cell"/>
    <property type="evidence" value="ECO:0007669"/>
    <property type="project" value="UniProtKB-KW"/>
</dbReference>
<dbReference type="GO" id="GO:0019062">
    <property type="term" value="P:virion attachment to host cell"/>
    <property type="evidence" value="ECO:0007669"/>
    <property type="project" value="UniProtKB-KW"/>
</dbReference>
<dbReference type="InterPro" id="IPR000925">
    <property type="entry name" value="G_prot"/>
</dbReference>
<dbReference type="Pfam" id="PF00802">
    <property type="entry name" value="Glycoprotein_G"/>
    <property type="match status" value="1"/>
</dbReference>
<feature type="chain" id="PRO_0000142860" description="Major surface glycoprotein G">
    <location>
        <begin position="1"/>
        <end position="297"/>
    </location>
</feature>
<feature type="chain" id="PRO_0000451329" description="Mature secreted glycoprotein G">
    <location>
        <begin position="66"/>
        <end position="297"/>
    </location>
</feature>
<feature type="topological domain" description="Cytoplasmic" evidence="3">
    <location>
        <begin position="1"/>
        <end position="37"/>
    </location>
</feature>
<feature type="transmembrane region" description="Helical" evidence="3">
    <location>
        <begin position="38"/>
        <end position="66"/>
    </location>
</feature>
<feature type="topological domain" description="Extracellular" evidence="3">
    <location>
        <begin position="67"/>
        <end position="297"/>
    </location>
</feature>
<feature type="region of interest" description="Disordered" evidence="4">
    <location>
        <begin position="103"/>
        <end position="161"/>
    </location>
</feature>
<feature type="region of interest" description="Binding to host heparan sulfate" evidence="1">
    <location>
        <begin position="187"/>
        <end position="198"/>
    </location>
</feature>
<feature type="region of interest" description="Disordered" evidence="4">
    <location>
        <begin position="190"/>
        <end position="297"/>
    </location>
</feature>
<feature type="compositionally biased region" description="Low complexity" evidence="4">
    <location>
        <begin position="105"/>
        <end position="147"/>
    </location>
</feature>
<feature type="compositionally biased region" description="Basic residues" evidence="4">
    <location>
        <begin position="190"/>
        <end position="207"/>
    </location>
</feature>
<feature type="compositionally biased region" description="Basic and acidic residues" evidence="4">
    <location>
        <begin position="211"/>
        <end position="232"/>
    </location>
</feature>
<feature type="compositionally biased region" description="Low complexity" evidence="4">
    <location>
        <begin position="235"/>
        <end position="253"/>
    </location>
</feature>
<feature type="compositionally biased region" description="Polar residues" evidence="4">
    <location>
        <begin position="254"/>
        <end position="285"/>
    </location>
</feature>
<feature type="compositionally biased region" description="Pro residues" evidence="4">
    <location>
        <begin position="287"/>
        <end position="297"/>
    </location>
</feature>
<feature type="site" description="Cleavage" evidence="1">
    <location>
        <begin position="65"/>
        <end position="66"/>
    </location>
</feature>
<feature type="glycosylation site" description="O-linked (GalNAc...) threonine; by host" evidence="1">
    <location>
        <position position="70"/>
    </location>
</feature>
<feature type="glycosylation site" description="O-linked (GalNAc...) threonine; by host" evidence="1">
    <location>
        <position position="72"/>
    </location>
</feature>
<feature type="glycosylation site" description="O-linked (GalNAc...) threonine; by host" evidence="1">
    <location>
        <position position="80"/>
    </location>
</feature>
<feature type="glycosylation site" description="N-linked (GlcNAc...) asparagine; by host" evidence="3">
    <location>
        <position position="85"/>
    </location>
</feature>
<feature type="glycosylation site" description="O-linked (GalNAc...) threonine; by host" evidence="1">
    <location>
        <position position="86"/>
    </location>
</feature>
<feature type="glycosylation site" description="O-linked (GalNAc...) threonine; by host" evidence="1">
    <location>
        <position position="87"/>
    </location>
</feature>
<feature type="glycosylation site" description="O-linked (GalNAc...) threonine; by host" evidence="1">
    <location>
        <position position="92"/>
    </location>
</feature>
<feature type="glycosylation site" description="O-linked (GalNAc...) serine; by host" evidence="3">
    <location>
        <position position="100"/>
    </location>
</feature>
<feature type="glycosylation site" description="N-linked (GlcNAc...) asparagine; by host" evidence="3">
    <location>
        <position position="103"/>
    </location>
</feature>
<feature type="glycosylation site" description="O-linked (GalNAc...) serine; by host" evidence="3">
    <location>
        <position position="105"/>
    </location>
</feature>
<feature type="glycosylation site" description="O-linked (GalNAc...) threonine; by host" evidence="3">
    <location>
        <position position="113"/>
    </location>
</feature>
<feature type="glycosylation site" description="O-linked (GalNAc...) threonine; by host" evidence="3">
    <location>
        <position position="119"/>
    </location>
</feature>
<feature type="glycosylation site" description="N-linked (GlcNAc...) asparagine; by host" evidence="3">
    <location>
        <position position="135"/>
    </location>
</feature>
<feature type="glycosylation site" description="O-linked (GalNAc...) threonine; by host" evidence="3">
    <location>
        <position position="137"/>
    </location>
</feature>
<feature type="glycosylation site" description="O-linked (GalNAc...) threonine; by host" evidence="3">
    <location>
        <position position="138"/>
    </location>
</feature>
<feature type="glycosylation site" description="O-linked (GalNAc...) threonine; by host" evidence="3">
    <location>
        <position position="139"/>
    </location>
</feature>
<feature type="glycosylation site" description="O-linked (GalNAc...) serine; by host" evidence="3">
    <location>
        <position position="144"/>
    </location>
</feature>
<feature type="glycosylation site" description="O-linked (GalNAc...) threonine; by host" evidence="3">
    <location>
        <position position="147"/>
    </location>
</feature>
<feature type="glycosylation site" description="O-linked (GalNAc...) threonine; by host" evidence="3">
    <location>
        <position position="199"/>
    </location>
</feature>
<feature type="glycosylation site" description="O-linked (GalNAc...) threonine; by host" evidence="3">
    <location>
        <position position="203"/>
    </location>
</feature>
<feature type="glycosylation site" description="O-linked (GalNAc...) threonine; by host" evidence="3">
    <location>
        <position position="219"/>
    </location>
</feature>
<feature type="glycosylation site" description="O-linked (GalNAc...) threonine; by host" evidence="3">
    <location>
        <position position="231"/>
    </location>
</feature>
<feature type="glycosylation site" description="O-linked (GalNAc...) threonine; by host" evidence="3">
    <location>
        <position position="235"/>
    </location>
</feature>
<feature type="glycosylation site" description="N-linked (GlcNAc...) asparagine; by host" evidence="3">
    <location>
        <position position="237"/>
    </location>
</feature>
<feature type="glycosylation site" description="N-linked (GlcNAc...) asparagine; by host" evidence="3">
    <location>
        <position position="251"/>
    </location>
</feature>
<feature type="glycosylation site" description="O-linked (GalNAc...) threonine; by host" evidence="3">
    <location>
        <position position="253"/>
    </location>
</feature>
<feature type="glycosylation site" description="O-linked (GalNAc...) serine; by host" evidence="3">
    <location>
        <position position="269"/>
    </location>
</feature>
<feature type="glycosylation site" description="O-linked (GalNAc...) serine; by host" evidence="3">
    <location>
        <position position="275"/>
    </location>
</feature>
<feature type="glycosylation site" description="O-linked (GalNAc...) threonine; by host" evidence="3">
    <location>
        <position position="282"/>
    </location>
</feature>
<feature type="glycosylation site" description="O-linked (GalNAc...) serine; by host" evidence="3">
    <location>
        <position position="283"/>
    </location>
</feature>
<feature type="glycosylation site" description="O-linked (GalNAc...) serine; by host" evidence="3">
    <location>
        <position position="287"/>
    </location>
</feature>
<feature type="glycosylation site" description="N-linked (GlcNAc...) asparagine; by host" evidence="3">
    <location>
        <position position="294"/>
    </location>
</feature>
<feature type="disulfide bond" evidence="1">
    <location>
        <begin position="173"/>
        <end position="186"/>
    </location>
</feature>
<feature type="disulfide bond" evidence="1">
    <location>
        <begin position="176"/>
        <end position="182"/>
    </location>
</feature>
<feature type="splice variant" id="VSP_036528" description="In isoform Secreted glycoprotein G." evidence="1">
    <location>
        <begin position="1"/>
        <end position="47"/>
    </location>
</feature>
<organismHost>
    <name type="scientific">Homo sapiens</name>
    <name type="common">Human</name>
    <dbReference type="NCBI Taxonomy" id="9606"/>
</organismHost>
<comment type="function">
    <molecule>Isoform Membrane-bound glycoprotein G</molecule>
    <text evidence="1">Attaches the virion to the host cell membrane by interacting with heparan sulfate, initiating the infection. Interacts with host CX3CR1, the receptor for the CX3C chemokine fractalkine, to modulate the immune response and facilitate infection. Unlike the other paramyxovirus attachment proteins, lacks both neuraminidase and hemagglutinating activities.</text>
</comment>
<comment type="function">
    <molecule>Isoform Secreted glycoprotein G</molecule>
    <text evidence="1">Helps the virus escape antibody-dependent restriction of replication by acting as an antigen decoy and by modulating the activity of leukocytes bearing Fc-gamma receptors.</text>
</comment>
<comment type="subunit">
    <molecule>Isoform Membrane-bound glycoprotein G</molecule>
    <text evidence="1">Homooligomer. Interacts (via N-terminus) with protein M. Part of a complex composed of F1, F2 and G glycoproteins. Interacts with protein SH. Interacts with host heparate sulfate; this interaction probably participates in the viral attachment to the host cell. Interacts with host CX3CR1; this interaction plays an important role in viral entry. Interacts with the host lectins CD209/DC-SIGN and CD209L/L-SIGN on dendritic cells; these interactions stimulate the phosphorylation of MAPK3/ERK1 and MAPK1/ERK2, which inhibits dendritic cell activation and could participate in the limited immunity against RSV reinfection.</text>
</comment>
<comment type="subcellular location">
    <molecule>Isoform Membrane-bound glycoprotein G</molecule>
    <subcellularLocation>
        <location evidence="1">Virion membrane</location>
        <topology evidence="1">Single-pass type II membrane protein</topology>
    </subcellularLocation>
    <subcellularLocation>
        <location evidence="1">Host cell membrane</location>
        <topology evidence="1">Single-pass type II membrane protein</topology>
    </subcellularLocation>
</comment>
<comment type="subcellular location">
    <molecule>Isoform Secreted glycoprotein G</molecule>
    <subcellularLocation>
        <location evidence="2">Secreted</location>
    </subcellularLocation>
    <text evidence="2">The protein is shed from infected cells before the appearance of progeny virus. The initiation at the downstream methionine removes a portion of the transmembrane domain. The remaining hydrophobic portion of the sG protein is essential for translocating it into the lumen of the ER during translation and would likely maintain its membrane association until a proteolytic event releases the mature sG protein into the medium.</text>
</comment>
<comment type="alternative products">
    <event type="alternative initiation"/>
    <isoform>
        <id>P27023-1</id>
        <name>Membrane-bound glycoprotein G</name>
        <sequence type="displayed"/>
    </isoform>
    <isoform>
        <id>P27023-2</id>
        <name>Secreted glycoprotein G</name>
        <sequence type="described" ref="VSP_036528"/>
    </isoform>
</comment>
<comment type="domain">
    <molecule>Isoform Membrane-bound glycoprotein G</molecule>
    <text evidence="1">Contains a linear heparin binding domain essential for virus attachment to the host.</text>
</comment>
<comment type="PTM">
    <molecule>Isoform Secreted glycoprotein G</molecule>
    <text evidence="2">Cleaved to give rise to the mature sG protein which lacks the transmembrane domain.</text>
</comment>
<comment type="PTM">
    <molecule>Isoform Membrane-bound glycoprotein G</molecule>
    <text evidence="1">N- and O-glycosylated. May carry 30-40 separate O-linked carbohydrate chains distributed among the 91 serine and threonine residues.</text>
</comment>
<comment type="PTM">
    <molecule>Isoform Membrane-bound glycoprotein G</molecule>
    <text evidence="1">Palmitoylated.</text>
</comment>
<comment type="similarity">
    <text evidence="5">Belongs to the pneumoviruses glycoprotein G family.</text>
</comment>
<name>GLYC_HRSV4</name>
<evidence type="ECO:0000250" key="1">
    <source>
        <dbReference type="UniProtKB" id="P03423"/>
    </source>
</evidence>
<evidence type="ECO:0000250" key="2">
    <source>
        <dbReference type="UniProtKB" id="P20895"/>
    </source>
</evidence>
<evidence type="ECO:0000255" key="3"/>
<evidence type="ECO:0000256" key="4">
    <source>
        <dbReference type="SAM" id="MobiDB-lite"/>
    </source>
</evidence>
<evidence type="ECO:0000305" key="5"/>
<organism>
    <name type="scientific">Human respiratory syncytial virus A (strain rsb5857)</name>
    <dbReference type="NCBI Taxonomy" id="11254"/>
    <lineage>
        <taxon>Viruses</taxon>
        <taxon>Riboviria</taxon>
        <taxon>Orthornavirae</taxon>
        <taxon>Negarnaviricota</taxon>
        <taxon>Haploviricotina</taxon>
        <taxon>Monjiviricetes</taxon>
        <taxon>Mononegavirales</taxon>
        <taxon>Pneumoviridae</taxon>
        <taxon>Orthopneumovirus</taxon>
        <taxon>Orthopneumovirus hominis</taxon>
    </lineage>
</organism>
<proteinExistence type="inferred from homology"/>
<keyword id="KW-0024">Alternative initiation</keyword>
<keyword id="KW-1015">Disulfide bond</keyword>
<keyword id="KW-0325">Glycoprotein</keyword>
<keyword id="KW-1032">Host cell membrane</keyword>
<keyword id="KW-1043">Host membrane</keyword>
<keyword id="KW-0945">Host-virus interaction</keyword>
<keyword id="KW-0472">Membrane</keyword>
<keyword id="KW-0964">Secreted</keyword>
<keyword id="KW-0812">Transmembrane</keyword>
<keyword id="KW-1133">Transmembrane helix</keyword>
<keyword id="KW-1161">Viral attachment to host cell</keyword>
<keyword id="KW-0899">Viral immunoevasion</keyword>
<keyword id="KW-0946">Virion</keyword>
<keyword id="KW-1160">Virus entry into host cell</keyword>